<sequence length="398" mass="43219">MSLNSLDLPGKSEDTRVVVAMSGGVDSSVVAGILKREGYDVVGVTLQLYDHGAAVHRAGSCCAGQDIEDARRVSESLGIPHYVLDYEARFREAVIDPFANSYVSGETPIPCVSCNQTVKFADLLQTARDLGADALATGHYIRSRANGAHRALYRPVDTDRDQSYFLFATTQEQIDYLRFPLGHLPKAQVREIAEELGLTVAKKQDSQDICFVPQGKYSDIISRLKPEAANPGDIVHIDGRTLGRHDGIVHYTVGQRRGIGVATGEALYVVHLDAANARVIVGPREALETHKVFLRDVNWLGDTPIADLPKSGMEVFAKVRSTRPPRPAVLRHADGQTWVELVDGESGIAPGQACVLYSDDSNAARVFGGGFIGRSEREPQAEEMLRRLMANADKASAA</sequence>
<name>MNMA_BRUC2</name>
<proteinExistence type="inferred from homology"/>
<reference key="1">
    <citation type="submission" date="2007-10" db="EMBL/GenBank/DDBJ databases">
        <title>Brucella canis ATCC 23365 whole genome shotgun sequencing project.</title>
        <authorList>
            <person name="Setubal J.C."/>
            <person name="Bowns C."/>
            <person name="Boyle S."/>
            <person name="Crasta O.R."/>
            <person name="Czar M.J."/>
            <person name="Dharmanolla C."/>
            <person name="Gillespie J.J."/>
            <person name="Kenyon R.W."/>
            <person name="Lu J."/>
            <person name="Mane S."/>
            <person name="Mohapatra S."/>
            <person name="Nagrani S."/>
            <person name="Purkayastha A."/>
            <person name="Rajasimha H.K."/>
            <person name="Shallom J.M."/>
            <person name="Shallom S."/>
            <person name="Shukla M."/>
            <person name="Snyder E.E."/>
            <person name="Sobral B.W."/>
            <person name="Wattam A.R."/>
            <person name="Will R."/>
            <person name="Williams K."/>
            <person name="Yoo H."/>
            <person name="Bruce D."/>
            <person name="Detter C."/>
            <person name="Munk C."/>
            <person name="Brettin T.S."/>
        </authorList>
    </citation>
    <scope>NUCLEOTIDE SEQUENCE [LARGE SCALE GENOMIC DNA]</scope>
    <source>
        <strain>ATCC 23365 / NCTC 10854 / RM-666</strain>
    </source>
</reference>
<keyword id="KW-0067">ATP-binding</keyword>
<keyword id="KW-0963">Cytoplasm</keyword>
<keyword id="KW-1015">Disulfide bond</keyword>
<keyword id="KW-0547">Nucleotide-binding</keyword>
<keyword id="KW-1185">Reference proteome</keyword>
<keyword id="KW-0694">RNA-binding</keyword>
<keyword id="KW-0808">Transferase</keyword>
<keyword id="KW-0819">tRNA processing</keyword>
<keyword id="KW-0820">tRNA-binding</keyword>
<dbReference type="EC" id="2.8.1.13" evidence="1"/>
<dbReference type="EMBL" id="CP000872">
    <property type="protein sequence ID" value="ABX62647.1"/>
    <property type="molecule type" value="Genomic_DNA"/>
</dbReference>
<dbReference type="SMR" id="A9M700"/>
<dbReference type="KEGG" id="bcs:BCAN_A1626"/>
<dbReference type="HOGENOM" id="CLU_035188_0_1_5"/>
<dbReference type="PhylomeDB" id="A9M700"/>
<dbReference type="Proteomes" id="UP000001385">
    <property type="component" value="Chromosome I"/>
</dbReference>
<dbReference type="GO" id="GO:0005737">
    <property type="term" value="C:cytoplasm"/>
    <property type="evidence" value="ECO:0007669"/>
    <property type="project" value="UniProtKB-SubCell"/>
</dbReference>
<dbReference type="GO" id="GO:0005524">
    <property type="term" value="F:ATP binding"/>
    <property type="evidence" value="ECO:0007669"/>
    <property type="project" value="UniProtKB-KW"/>
</dbReference>
<dbReference type="GO" id="GO:0000049">
    <property type="term" value="F:tRNA binding"/>
    <property type="evidence" value="ECO:0007669"/>
    <property type="project" value="UniProtKB-KW"/>
</dbReference>
<dbReference type="GO" id="GO:0103016">
    <property type="term" value="F:tRNA-uridine 2-sulfurtransferase activity"/>
    <property type="evidence" value="ECO:0007669"/>
    <property type="project" value="UniProtKB-EC"/>
</dbReference>
<dbReference type="GO" id="GO:0002143">
    <property type="term" value="P:tRNA wobble position uridine thiolation"/>
    <property type="evidence" value="ECO:0007669"/>
    <property type="project" value="TreeGrafter"/>
</dbReference>
<dbReference type="CDD" id="cd01998">
    <property type="entry name" value="MnmA_TRMU-like"/>
    <property type="match status" value="1"/>
</dbReference>
<dbReference type="FunFam" id="2.30.30.280:FF:000001">
    <property type="entry name" value="tRNA-specific 2-thiouridylase MnmA"/>
    <property type="match status" value="1"/>
</dbReference>
<dbReference type="FunFam" id="3.40.50.620:FF:000115">
    <property type="entry name" value="tRNA-specific 2-thiouridylase MnmA"/>
    <property type="match status" value="1"/>
</dbReference>
<dbReference type="Gene3D" id="2.30.30.280">
    <property type="entry name" value="Adenine nucleotide alpha hydrolases-like domains"/>
    <property type="match status" value="1"/>
</dbReference>
<dbReference type="Gene3D" id="3.40.50.620">
    <property type="entry name" value="HUPs"/>
    <property type="match status" value="1"/>
</dbReference>
<dbReference type="Gene3D" id="2.40.30.10">
    <property type="entry name" value="Translation factors"/>
    <property type="match status" value="1"/>
</dbReference>
<dbReference type="HAMAP" id="MF_00144">
    <property type="entry name" value="tRNA_thiouridyl_MnmA"/>
    <property type="match status" value="1"/>
</dbReference>
<dbReference type="InterPro" id="IPR004506">
    <property type="entry name" value="MnmA-like"/>
</dbReference>
<dbReference type="InterPro" id="IPR046885">
    <property type="entry name" value="MnmA-like_C"/>
</dbReference>
<dbReference type="InterPro" id="IPR046884">
    <property type="entry name" value="MnmA-like_central"/>
</dbReference>
<dbReference type="InterPro" id="IPR023382">
    <property type="entry name" value="MnmA-like_central_sf"/>
</dbReference>
<dbReference type="InterPro" id="IPR014729">
    <property type="entry name" value="Rossmann-like_a/b/a_fold"/>
</dbReference>
<dbReference type="NCBIfam" id="NF001138">
    <property type="entry name" value="PRK00143.1"/>
    <property type="match status" value="1"/>
</dbReference>
<dbReference type="NCBIfam" id="TIGR00420">
    <property type="entry name" value="trmU"/>
    <property type="match status" value="1"/>
</dbReference>
<dbReference type="PANTHER" id="PTHR11933:SF5">
    <property type="entry name" value="MITOCHONDRIAL TRNA-SPECIFIC 2-THIOURIDYLASE 1"/>
    <property type="match status" value="1"/>
</dbReference>
<dbReference type="PANTHER" id="PTHR11933">
    <property type="entry name" value="TRNA 5-METHYLAMINOMETHYL-2-THIOURIDYLATE -METHYLTRANSFERASE"/>
    <property type="match status" value="1"/>
</dbReference>
<dbReference type="Pfam" id="PF03054">
    <property type="entry name" value="tRNA_Me_trans"/>
    <property type="match status" value="1"/>
</dbReference>
<dbReference type="Pfam" id="PF20258">
    <property type="entry name" value="tRNA_Me_trans_C"/>
    <property type="match status" value="1"/>
</dbReference>
<dbReference type="Pfam" id="PF20259">
    <property type="entry name" value="tRNA_Me_trans_M"/>
    <property type="match status" value="1"/>
</dbReference>
<dbReference type="SUPFAM" id="SSF52402">
    <property type="entry name" value="Adenine nucleotide alpha hydrolases-like"/>
    <property type="match status" value="1"/>
</dbReference>
<accession>A9M700</accession>
<comment type="function">
    <text evidence="1">Catalyzes the 2-thiolation of uridine at the wobble position (U34) of tRNA, leading to the formation of s(2)U34.</text>
</comment>
<comment type="catalytic activity">
    <reaction evidence="1">
        <text>S-sulfanyl-L-cysteinyl-[protein] + uridine(34) in tRNA + AH2 + ATP = 2-thiouridine(34) in tRNA + L-cysteinyl-[protein] + A + AMP + diphosphate + H(+)</text>
        <dbReference type="Rhea" id="RHEA:47032"/>
        <dbReference type="Rhea" id="RHEA-COMP:10131"/>
        <dbReference type="Rhea" id="RHEA-COMP:11726"/>
        <dbReference type="Rhea" id="RHEA-COMP:11727"/>
        <dbReference type="Rhea" id="RHEA-COMP:11728"/>
        <dbReference type="ChEBI" id="CHEBI:13193"/>
        <dbReference type="ChEBI" id="CHEBI:15378"/>
        <dbReference type="ChEBI" id="CHEBI:17499"/>
        <dbReference type="ChEBI" id="CHEBI:29950"/>
        <dbReference type="ChEBI" id="CHEBI:30616"/>
        <dbReference type="ChEBI" id="CHEBI:33019"/>
        <dbReference type="ChEBI" id="CHEBI:61963"/>
        <dbReference type="ChEBI" id="CHEBI:65315"/>
        <dbReference type="ChEBI" id="CHEBI:87170"/>
        <dbReference type="ChEBI" id="CHEBI:456215"/>
        <dbReference type="EC" id="2.8.1.13"/>
    </reaction>
</comment>
<comment type="subcellular location">
    <subcellularLocation>
        <location evidence="1">Cytoplasm</location>
    </subcellularLocation>
</comment>
<comment type="similarity">
    <text evidence="1">Belongs to the MnmA/TRMU family.</text>
</comment>
<feature type="chain" id="PRO_1000076558" description="tRNA-specific 2-thiouridylase MnmA">
    <location>
        <begin position="1"/>
        <end position="398"/>
    </location>
</feature>
<feature type="region of interest" description="Interaction with tRNA" evidence="1">
    <location>
        <begin position="160"/>
        <end position="162"/>
    </location>
</feature>
<feature type="active site" description="Nucleophile" evidence="1">
    <location>
        <position position="114"/>
    </location>
</feature>
<feature type="active site" description="Cysteine persulfide intermediate" evidence="1">
    <location>
        <position position="210"/>
    </location>
</feature>
<feature type="binding site" evidence="1">
    <location>
        <begin position="20"/>
        <end position="27"/>
    </location>
    <ligand>
        <name>ATP</name>
        <dbReference type="ChEBI" id="CHEBI:30616"/>
    </ligand>
</feature>
<feature type="binding site" evidence="1">
    <location>
        <position position="46"/>
    </location>
    <ligand>
        <name>ATP</name>
        <dbReference type="ChEBI" id="CHEBI:30616"/>
    </ligand>
</feature>
<feature type="binding site" evidence="1">
    <location>
        <position position="138"/>
    </location>
    <ligand>
        <name>ATP</name>
        <dbReference type="ChEBI" id="CHEBI:30616"/>
    </ligand>
</feature>
<feature type="site" description="Interaction with tRNA" evidence="1">
    <location>
        <position position="139"/>
    </location>
</feature>
<feature type="site" description="Interaction with tRNA" evidence="1">
    <location>
        <position position="352"/>
    </location>
</feature>
<feature type="disulfide bond" description="Alternate" evidence="1">
    <location>
        <begin position="114"/>
        <end position="210"/>
    </location>
</feature>
<organism>
    <name type="scientific">Brucella canis (strain ATCC 23365 / NCTC 10854 / RM-666)</name>
    <dbReference type="NCBI Taxonomy" id="483179"/>
    <lineage>
        <taxon>Bacteria</taxon>
        <taxon>Pseudomonadati</taxon>
        <taxon>Pseudomonadota</taxon>
        <taxon>Alphaproteobacteria</taxon>
        <taxon>Hyphomicrobiales</taxon>
        <taxon>Brucellaceae</taxon>
        <taxon>Brucella/Ochrobactrum group</taxon>
        <taxon>Brucella</taxon>
    </lineage>
</organism>
<gene>
    <name evidence="1" type="primary">mnmA</name>
    <name type="synonym">trmU</name>
    <name type="ordered locus">BCAN_A1626</name>
</gene>
<protein>
    <recommendedName>
        <fullName evidence="1">tRNA-specific 2-thiouridylase MnmA</fullName>
        <ecNumber evidence="1">2.8.1.13</ecNumber>
    </recommendedName>
</protein>
<evidence type="ECO:0000255" key="1">
    <source>
        <dbReference type="HAMAP-Rule" id="MF_00144"/>
    </source>
</evidence>